<reference key="1">
    <citation type="journal article" date="1999" name="Nature">
        <title>Evidence for lateral gene transfer between Archaea and Bacteria from genome sequence of Thermotoga maritima.</title>
        <authorList>
            <person name="Nelson K.E."/>
            <person name="Clayton R.A."/>
            <person name="Gill S.R."/>
            <person name="Gwinn M.L."/>
            <person name="Dodson R.J."/>
            <person name="Haft D.H."/>
            <person name="Hickey E.K."/>
            <person name="Peterson J.D."/>
            <person name="Nelson W.C."/>
            <person name="Ketchum K.A."/>
            <person name="McDonald L.A."/>
            <person name="Utterback T.R."/>
            <person name="Malek J.A."/>
            <person name="Linher K.D."/>
            <person name="Garrett M.M."/>
            <person name="Stewart A.M."/>
            <person name="Cotton M.D."/>
            <person name="Pratt M.S."/>
            <person name="Phillips C.A."/>
            <person name="Richardson D.L."/>
            <person name="Heidelberg J.F."/>
            <person name="Sutton G.G."/>
            <person name="Fleischmann R.D."/>
            <person name="Eisen J.A."/>
            <person name="White O."/>
            <person name="Salzberg S.L."/>
            <person name="Smith H.O."/>
            <person name="Venter J.C."/>
            <person name="Fraser C.M."/>
        </authorList>
    </citation>
    <scope>NUCLEOTIDE SEQUENCE [LARGE SCALE GENOMIC DNA]</scope>
    <source>
        <strain>ATCC 43589 / DSM 3109 / JCM 10099 / NBRC 100826 / MSB8</strain>
    </source>
</reference>
<reference key="2">
    <citation type="journal article" date="2013" name="PLoS Genet.">
        <title>The genome organization of Thermotoga maritima reflects its lifestyle.</title>
        <authorList>
            <person name="Latif H."/>
            <person name="Lerman J.A."/>
            <person name="Portnoy V.A."/>
            <person name="Tarasova Y."/>
            <person name="Nagarajan H."/>
            <person name="Schrimpe-Rutledge A.C."/>
            <person name="Smith R.D."/>
            <person name="Adkins J.N."/>
            <person name="Lee D.H."/>
            <person name="Qiu Y."/>
            <person name="Zengler K."/>
        </authorList>
    </citation>
    <scope>NUCLEOTIDE SEQUENCE [LARGE SCALE GENOMIC DNA]</scope>
    <source>
        <strain>ATCC 43589 / DSM 3109 / JCM 10099 / NBRC 100826 / MSB8</strain>
    </source>
</reference>
<reference key="3">
    <citation type="journal article" date="2012" name="Environ. Microbiol.">
        <title>Tagaturonate-fructuronate epimerase UxaE, a novel enzyme in the hexuronate catabolic network in Thermotoga maritima.</title>
        <authorList>
            <person name="Rodionova I.A."/>
            <person name="Scott D.A."/>
            <person name="Grishin N.V."/>
            <person name="Osterman A.L."/>
            <person name="Rodionov D.A."/>
        </authorList>
    </citation>
    <scope>FUNCTION</scope>
    <scope>CATALYTIC ACTIVITY</scope>
    <scope>REACTION MECHANISM</scope>
    <scope>BIOPHYSICOCHEMICAL PROPERTIES</scope>
    <scope>COFACTOR</scope>
    <scope>ACTIVE SITE</scope>
</reference>
<name>UXAE_THEMA</name>
<protein>
    <recommendedName>
        <fullName evidence="3">Tagaturonate/fructuronate epimerase</fullName>
        <shortName evidence="3">D-TagA/D-FruA epimerase</shortName>
        <ecNumber evidence="2">5.1.2.7</ecNumber>
    </recommendedName>
</protein>
<accession>Q9WYS1</accession>
<accession>G4FE30</accession>
<accession>R4NYH0</accession>
<gene>
    <name evidence="3" type="primary">uxaE</name>
    <name evidence="6" type="ordered locus">TM_0440</name>
    <name evidence="7" type="ORF">Tmari_0437</name>
</gene>
<evidence type="ECO:0000255" key="1">
    <source>
        <dbReference type="HAMAP-Rule" id="MF_02243"/>
    </source>
</evidence>
<evidence type="ECO:0000269" key="2">
    <source>
    </source>
</evidence>
<evidence type="ECO:0000303" key="3">
    <source>
    </source>
</evidence>
<evidence type="ECO:0000305" key="4"/>
<evidence type="ECO:0000305" key="5">
    <source>
    </source>
</evidence>
<evidence type="ECO:0000312" key="6">
    <source>
        <dbReference type="EMBL" id="AAD35525.1"/>
    </source>
</evidence>
<evidence type="ECO:0000312" key="7">
    <source>
        <dbReference type="EMBL" id="AGL49362.1"/>
    </source>
</evidence>
<proteinExistence type="evidence at protein level"/>
<sequence length="481" mass="55626">MVLKVFKDHFGRGYEVYEKSYREKDSLSFFLTKEEEGKILVVAGEKAPEGLSFFKKQRAEGVSFFFCERNHENLEVLRKYFPDLKPVRAGLRASFGTGDRLGITTPAHVRALKDSGLFPIFAQQSVRENERTGRTWRDVLDDATWGVFQEGYSEGFGADADHVKRPEDLVSAAREGFTMFTIDPSDHVRNLSKLTEKERNEKFEEILRKERIDRIYLGKKYSVLGEKIEFDEKNLRDAALVYYDAIAHVDMMYQILKDETPDFDFEVSVDETETPTSPLFHIFVVEELRRRGVEFTNLALRFIGEWEKGIDYKGDLAQFEREIKMHAEIARMFEGYKISLHSGSDKFSVYPAFASATGGLFHVKTAGTSYLEAVKVISMVNPELFREIYRCTLDHFEEDRKSYHISADLSKVPEVEKVKDEDLPGLFEDINVRQLIHVTYGSVLKDASLKERLFKTLEQNEELFYETVAKHIKRHVDLLEG</sequence>
<keyword id="KW-0413">Isomerase</keyword>
<keyword id="KW-0479">Metal-binding</keyword>
<keyword id="KW-1185">Reference proteome</keyword>
<dbReference type="EC" id="5.1.2.7" evidence="2"/>
<dbReference type="EMBL" id="AE000512">
    <property type="protein sequence ID" value="AAD35525.1"/>
    <property type="molecule type" value="Genomic_DNA"/>
</dbReference>
<dbReference type="EMBL" id="CP004077">
    <property type="protein sequence ID" value="AGL49362.1"/>
    <property type="molecule type" value="Genomic_DNA"/>
</dbReference>
<dbReference type="PIR" id="C72377">
    <property type="entry name" value="C72377"/>
</dbReference>
<dbReference type="RefSeq" id="NP_228250.1">
    <property type="nucleotide sequence ID" value="NC_000853.1"/>
</dbReference>
<dbReference type="RefSeq" id="WP_004081526.1">
    <property type="nucleotide sequence ID" value="NC_000853.1"/>
</dbReference>
<dbReference type="SMR" id="Q9WYS1"/>
<dbReference type="STRING" id="243274.TM_0440"/>
<dbReference type="PaxDb" id="243274-THEMA_02525"/>
<dbReference type="EnsemblBacteria" id="AAD35525">
    <property type="protein sequence ID" value="AAD35525"/>
    <property type="gene ID" value="TM_0440"/>
</dbReference>
<dbReference type="KEGG" id="tma:TM0440"/>
<dbReference type="KEGG" id="tmi:THEMA_02525"/>
<dbReference type="KEGG" id="tmm:Tmari_0437"/>
<dbReference type="KEGG" id="tmw:THMA_0446"/>
<dbReference type="PATRIC" id="fig|243274.17.peg.438"/>
<dbReference type="eggNOG" id="ENOG502Z82R">
    <property type="taxonomic scope" value="Bacteria"/>
</dbReference>
<dbReference type="InParanoid" id="Q9WYS1"/>
<dbReference type="OrthoDB" id="9797992at2"/>
<dbReference type="BioCyc" id="MetaCyc:MONOMER-17952"/>
<dbReference type="BRENDA" id="5.1.2.7">
    <property type="organism ID" value="6331"/>
</dbReference>
<dbReference type="Proteomes" id="UP000008183">
    <property type="component" value="Chromosome"/>
</dbReference>
<dbReference type="GO" id="GO:0046872">
    <property type="term" value="F:metal ion binding"/>
    <property type="evidence" value="ECO:0007669"/>
    <property type="project" value="UniProtKB-UniRule"/>
</dbReference>
<dbReference type="GO" id="GO:0016856">
    <property type="term" value="F:racemase and epimerase activity, acting on hydroxy acids and derivatives"/>
    <property type="evidence" value="ECO:0007669"/>
    <property type="project" value="UniProtKB-UniRule"/>
</dbReference>
<dbReference type="HAMAP" id="MF_02243">
    <property type="entry name" value="UxaE"/>
    <property type="match status" value="1"/>
</dbReference>
<dbReference type="InterPro" id="IPR032586">
    <property type="entry name" value="UxaE"/>
</dbReference>
<dbReference type="Pfam" id="PF16257">
    <property type="entry name" value="UxaE"/>
    <property type="match status" value="1"/>
</dbReference>
<organism>
    <name type="scientific">Thermotoga maritima (strain ATCC 43589 / DSM 3109 / JCM 10099 / NBRC 100826 / MSB8)</name>
    <dbReference type="NCBI Taxonomy" id="243274"/>
    <lineage>
        <taxon>Bacteria</taxon>
        <taxon>Thermotogati</taxon>
        <taxon>Thermotogota</taxon>
        <taxon>Thermotogae</taxon>
        <taxon>Thermotogales</taxon>
        <taxon>Thermotogaceae</taxon>
        <taxon>Thermotoga</taxon>
    </lineage>
</organism>
<feature type="chain" id="PRO_0000449571" description="Tagaturonate/fructuronate epimerase">
    <location>
        <begin position="1"/>
        <end position="481"/>
    </location>
</feature>
<feature type="active site" description="Proton acceptor" evidence="1 5">
    <location>
        <position position="161"/>
    </location>
</feature>
<feature type="active site" description="Proton donor" evidence="1 5">
    <location>
        <position position="266"/>
    </location>
</feature>
<feature type="binding site" evidence="1 5">
    <location>
        <position position="162"/>
    </location>
    <ligand>
        <name>a divalent metal cation</name>
        <dbReference type="ChEBI" id="CHEBI:60240"/>
    </ligand>
</feature>
<feature type="binding site" evidence="1 5">
    <location>
        <position position="308"/>
    </location>
    <ligand>
        <name>a divalent metal cation</name>
        <dbReference type="ChEBI" id="CHEBI:60240"/>
    </ligand>
</feature>
<feature type="binding site" evidence="1 5">
    <location>
        <position position="341"/>
    </location>
    <ligand>
        <name>a divalent metal cation</name>
        <dbReference type="ChEBI" id="CHEBI:60240"/>
    </ligand>
</feature>
<comment type="function">
    <text evidence="1 2">Catalyzes the epimerization of D-tagaturonate (D-TagA) to D-fructuronate (D-FruA).</text>
</comment>
<comment type="catalytic activity">
    <reaction evidence="1 2">
        <text>keto-D-tagaturonate = keto-D-fructuronate</text>
        <dbReference type="Rhea" id="RHEA:51656"/>
        <dbReference type="ChEBI" id="CHEBI:17886"/>
        <dbReference type="ChEBI" id="CHEBI:59881"/>
        <dbReference type="EC" id="5.1.2.7"/>
    </reaction>
</comment>
<comment type="cofactor">
    <cofactor evidence="1 5">
        <name>a divalent metal cation</name>
        <dbReference type="ChEBI" id="CHEBI:60240"/>
    </cofactor>
</comment>
<comment type="biophysicochemical properties">
    <kinetics>
        <KM evidence="2">0.68 mM for D-fructuronate</KM>
        <text evidence="2">kcat is 6.5 sec(-1) with D-fructuronate as substrate.</text>
    </kinetics>
    <temperatureDependence>
        <text evidence="2">Optimum temperature is 60 degrees Celsius.</text>
    </temperatureDependence>
</comment>
<comment type="similarity">
    <text evidence="1 4">Belongs to the UxaE family.</text>
</comment>